<keyword id="KW-0456">Lyase</keyword>
<keyword id="KW-0663">Pyridoxal phosphate</keyword>
<accession>Q8Z5S9</accession>
<name>DCYD_SALTI</name>
<sequence>MPLHHLTRFPRLELIGAPTPLEYLPRLSDYLGREIYIKRDDVTPIAMGGNKLRKLEFLVADALREGADTLITAGAIQSNHVRQTAAVAAKLGLHCVALLENPIGTTAENYLTNGNRLLLDLFNTQIEMCDALTDPDAQLQTLATRIEAQGFRPYVIPVGGSSALGAMGYVESALEIVQQCEEVVGLSSVVVASGSAGTHAGLAVGLEHLMPDVELIGVTVSRSVAEQKPKVIALQQAIAGQLALTATADIHLWDDYFAPGYGVPNDAGMEAVKLLANLEGVLLDPVYTGKAMAGLIDGISQKRFNDDGPILFIHTGGAPALFAYHPHV</sequence>
<gene>
    <name evidence="2" type="primary">dcyD</name>
    <name type="ordered locus">STY2161</name>
    <name type="ordered locus">t0923</name>
</gene>
<comment type="function">
    <text evidence="2">Catalyzes the alpha,beta-elimination reaction of D-cysteine and of several D-cysteine derivatives. It could be a defense mechanism against D-cysteine.</text>
</comment>
<comment type="catalytic activity">
    <reaction evidence="2">
        <text>D-cysteine + H2O = hydrogen sulfide + pyruvate + NH4(+) + H(+)</text>
        <dbReference type="Rhea" id="RHEA:11268"/>
        <dbReference type="ChEBI" id="CHEBI:15361"/>
        <dbReference type="ChEBI" id="CHEBI:15377"/>
        <dbReference type="ChEBI" id="CHEBI:15378"/>
        <dbReference type="ChEBI" id="CHEBI:28938"/>
        <dbReference type="ChEBI" id="CHEBI:29919"/>
        <dbReference type="ChEBI" id="CHEBI:35236"/>
        <dbReference type="EC" id="4.4.1.15"/>
    </reaction>
</comment>
<comment type="cofactor">
    <cofactor evidence="2">
        <name>pyridoxal 5'-phosphate</name>
        <dbReference type="ChEBI" id="CHEBI:597326"/>
    </cofactor>
</comment>
<comment type="subunit">
    <text evidence="2">Homodimer.</text>
</comment>
<comment type="similarity">
    <text evidence="2">Belongs to the ACC deaminase/D-cysteine desulfhydrase family.</text>
</comment>
<reference key="1">
    <citation type="journal article" date="2001" name="Nature">
        <title>Complete genome sequence of a multiple drug resistant Salmonella enterica serovar Typhi CT18.</title>
        <authorList>
            <person name="Parkhill J."/>
            <person name="Dougan G."/>
            <person name="James K.D."/>
            <person name="Thomson N.R."/>
            <person name="Pickard D."/>
            <person name="Wain J."/>
            <person name="Churcher C.M."/>
            <person name="Mungall K.L."/>
            <person name="Bentley S.D."/>
            <person name="Holden M.T.G."/>
            <person name="Sebaihia M."/>
            <person name="Baker S."/>
            <person name="Basham D."/>
            <person name="Brooks K."/>
            <person name="Chillingworth T."/>
            <person name="Connerton P."/>
            <person name="Cronin A."/>
            <person name="Davis P."/>
            <person name="Davies R.M."/>
            <person name="Dowd L."/>
            <person name="White N."/>
            <person name="Farrar J."/>
            <person name="Feltwell T."/>
            <person name="Hamlin N."/>
            <person name="Haque A."/>
            <person name="Hien T.T."/>
            <person name="Holroyd S."/>
            <person name="Jagels K."/>
            <person name="Krogh A."/>
            <person name="Larsen T.S."/>
            <person name="Leather S."/>
            <person name="Moule S."/>
            <person name="O'Gaora P."/>
            <person name="Parry C."/>
            <person name="Quail M.A."/>
            <person name="Rutherford K.M."/>
            <person name="Simmonds M."/>
            <person name="Skelton J."/>
            <person name="Stevens K."/>
            <person name="Whitehead S."/>
            <person name="Barrell B.G."/>
        </authorList>
    </citation>
    <scope>NUCLEOTIDE SEQUENCE [LARGE SCALE GENOMIC DNA]</scope>
    <source>
        <strain>CT18</strain>
    </source>
</reference>
<reference key="2">
    <citation type="journal article" date="2003" name="J. Bacteriol.">
        <title>Comparative genomics of Salmonella enterica serovar Typhi strains Ty2 and CT18.</title>
        <authorList>
            <person name="Deng W."/>
            <person name="Liou S.-R."/>
            <person name="Plunkett G. III"/>
            <person name="Mayhew G.F."/>
            <person name="Rose D.J."/>
            <person name="Burland V."/>
            <person name="Kodoyianni V."/>
            <person name="Schwartz D.C."/>
            <person name="Blattner F.R."/>
        </authorList>
    </citation>
    <scope>NUCLEOTIDE SEQUENCE [LARGE SCALE GENOMIC DNA]</scope>
    <source>
        <strain>ATCC 700931 / Ty2</strain>
    </source>
</reference>
<feature type="initiator methionine" description="Removed" evidence="1">
    <location>
        <position position="1"/>
    </location>
</feature>
<feature type="chain" id="PRO_0000184516" description="D-cysteine desulfhydrase">
    <location>
        <begin position="2"/>
        <end position="328"/>
    </location>
</feature>
<feature type="modified residue" description="N6-(pyridoxal phosphate)lysine" evidence="2">
    <location>
        <position position="51"/>
    </location>
</feature>
<organism>
    <name type="scientific">Salmonella typhi</name>
    <dbReference type="NCBI Taxonomy" id="90370"/>
    <lineage>
        <taxon>Bacteria</taxon>
        <taxon>Pseudomonadati</taxon>
        <taxon>Pseudomonadota</taxon>
        <taxon>Gammaproteobacteria</taxon>
        <taxon>Enterobacterales</taxon>
        <taxon>Enterobacteriaceae</taxon>
        <taxon>Salmonella</taxon>
    </lineage>
</organism>
<protein>
    <recommendedName>
        <fullName evidence="2">D-cysteine desulfhydrase</fullName>
        <ecNumber evidence="2">4.4.1.15</ecNumber>
    </recommendedName>
</protein>
<proteinExistence type="inferred from homology"/>
<dbReference type="EC" id="4.4.1.15" evidence="2"/>
<dbReference type="EMBL" id="AL513382">
    <property type="protein sequence ID" value="CAD05702.1"/>
    <property type="molecule type" value="Genomic_DNA"/>
</dbReference>
<dbReference type="EMBL" id="AE014613">
    <property type="protein sequence ID" value="AAO68600.1"/>
    <property type="molecule type" value="Genomic_DNA"/>
</dbReference>
<dbReference type="RefSeq" id="NP_456516.1">
    <property type="nucleotide sequence ID" value="NC_003198.1"/>
</dbReference>
<dbReference type="RefSeq" id="WP_001128192.1">
    <property type="nucleotide sequence ID" value="NZ_WSUR01000004.1"/>
</dbReference>
<dbReference type="SMR" id="Q8Z5S9"/>
<dbReference type="STRING" id="220341.gene:17586070"/>
<dbReference type="KEGG" id="stt:t0923"/>
<dbReference type="KEGG" id="sty:STY2161"/>
<dbReference type="PATRIC" id="fig|220341.7.peg.2173"/>
<dbReference type="eggNOG" id="COG2515">
    <property type="taxonomic scope" value="Bacteria"/>
</dbReference>
<dbReference type="HOGENOM" id="CLU_048897_1_0_6"/>
<dbReference type="OMA" id="ERYHAGT"/>
<dbReference type="Proteomes" id="UP000000541">
    <property type="component" value="Chromosome"/>
</dbReference>
<dbReference type="Proteomes" id="UP000002670">
    <property type="component" value="Chromosome"/>
</dbReference>
<dbReference type="GO" id="GO:0019148">
    <property type="term" value="F:D-cysteine desulfhydrase activity"/>
    <property type="evidence" value="ECO:0007669"/>
    <property type="project" value="UniProtKB-UniRule"/>
</dbReference>
<dbReference type="GO" id="GO:0046416">
    <property type="term" value="P:D-amino acid metabolic process"/>
    <property type="evidence" value="ECO:0007669"/>
    <property type="project" value="UniProtKB-UniRule"/>
</dbReference>
<dbReference type="CDD" id="cd06449">
    <property type="entry name" value="ACCD"/>
    <property type="match status" value="1"/>
</dbReference>
<dbReference type="FunFam" id="3.40.50.1100:FF:000019">
    <property type="entry name" value="D-cysteine desulfhydrase"/>
    <property type="match status" value="1"/>
</dbReference>
<dbReference type="Gene3D" id="3.40.50.1100">
    <property type="match status" value="2"/>
</dbReference>
<dbReference type="HAMAP" id="MF_01045">
    <property type="entry name" value="D_Cys_desulfhydr"/>
    <property type="match status" value="1"/>
</dbReference>
<dbReference type="InterPro" id="IPR027278">
    <property type="entry name" value="ACCD_DCysDesulf"/>
</dbReference>
<dbReference type="InterPro" id="IPR005966">
    <property type="entry name" value="D-Cys_desShydrase"/>
</dbReference>
<dbReference type="InterPro" id="IPR023702">
    <property type="entry name" value="D_Cys_desulphydr_bac"/>
</dbReference>
<dbReference type="InterPro" id="IPR001926">
    <property type="entry name" value="TrpB-like_PALP"/>
</dbReference>
<dbReference type="InterPro" id="IPR036052">
    <property type="entry name" value="TrpB-like_PALP_sf"/>
</dbReference>
<dbReference type="NCBIfam" id="TIGR01275">
    <property type="entry name" value="ACC_deam_rel"/>
    <property type="match status" value="1"/>
</dbReference>
<dbReference type="NCBIfam" id="NF003029">
    <property type="entry name" value="PRK03910.1-1"/>
    <property type="match status" value="1"/>
</dbReference>
<dbReference type="NCBIfam" id="NF003030">
    <property type="entry name" value="PRK03910.1-3"/>
    <property type="match status" value="1"/>
</dbReference>
<dbReference type="NCBIfam" id="NF003032">
    <property type="entry name" value="PRK03910.1-5"/>
    <property type="match status" value="1"/>
</dbReference>
<dbReference type="PANTHER" id="PTHR43780">
    <property type="entry name" value="1-AMINOCYCLOPROPANE-1-CARBOXYLATE DEAMINASE-RELATED"/>
    <property type="match status" value="1"/>
</dbReference>
<dbReference type="PANTHER" id="PTHR43780:SF2">
    <property type="entry name" value="1-AMINOCYCLOPROPANE-1-CARBOXYLATE DEAMINASE-RELATED"/>
    <property type="match status" value="1"/>
</dbReference>
<dbReference type="Pfam" id="PF00291">
    <property type="entry name" value="PALP"/>
    <property type="match status" value="1"/>
</dbReference>
<dbReference type="PIRSF" id="PIRSF006278">
    <property type="entry name" value="ACCD_DCysDesulf"/>
    <property type="match status" value="1"/>
</dbReference>
<dbReference type="SUPFAM" id="SSF53686">
    <property type="entry name" value="Tryptophan synthase beta subunit-like PLP-dependent enzymes"/>
    <property type="match status" value="1"/>
</dbReference>
<evidence type="ECO:0000250" key="1"/>
<evidence type="ECO:0000255" key="2">
    <source>
        <dbReference type="HAMAP-Rule" id="MF_01045"/>
    </source>
</evidence>